<dbReference type="EMBL" id="D10082">
    <property type="protein sequence ID" value="BAA00979.1"/>
    <property type="status" value="ALT_SEQ"/>
    <property type="molecule type" value="Genomic_DNA"/>
</dbReference>
<dbReference type="EMBL" id="D10082">
    <property type="protein sequence ID" value="BAA32340.1"/>
    <property type="status" value="ALT_SEQ"/>
    <property type="molecule type" value="Genomic_DNA"/>
</dbReference>
<dbReference type="EMBL" id="X83413">
    <property type="protein sequence ID" value="CAA58434.2"/>
    <property type="molecule type" value="Genomic_DNA"/>
</dbReference>
<dbReference type="PIR" id="JQ1651">
    <property type="entry name" value="JQ1651"/>
</dbReference>
<dbReference type="RefSeq" id="NP_042898.2">
    <property type="nucleotide sequence ID" value="NC_001664.2"/>
</dbReference>
<dbReference type="KEGG" id="vg:1487887"/>
<dbReference type="Proteomes" id="UP000009295">
    <property type="component" value="Segment"/>
</dbReference>
<dbReference type="InterPro" id="IPR010302">
    <property type="entry name" value="UL27-like_protein_herpesevirus"/>
</dbReference>
<dbReference type="InterPro" id="IPR003360">
    <property type="entry name" value="US22-like"/>
</dbReference>
<dbReference type="Pfam" id="PF05999">
    <property type="entry name" value="Herpes_U5"/>
    <property type="match status" value="1"/>
</dbReference>
<dbReference type="Pfam" id="PF02393">
    <property type="entry name" value="US22"/>
    <property type="match status" value="2"/>
</dbReference>
<proteinExistence type="inferred from homology"/>
<evidence type="ECO:0000305" key="1"/>
<reference key="1">
    <citation type="journal article" date="1992" name="J. Gen. Virol.">
        <title>Identification of homologues to the human cytomegalovirus US22 gene family in human herpesvirus 6.</title>
        <authorList>
            <person name="Efstathiou S."/>
            <person name="Lawrence G.L."/>
            <person name="Brown C.M."/>
            <person name="Barrell B.G."/>
        </authorList>
    </citation>
    <scope>NUCLEOTIDE SEQUENCE [GENOMIC DNA]</scope>
</reference>
<reference key="2">
    <citation type="journal article" date="1995" name="Virology">
        <title>The DNA sequence of human herpesvirus-6: structure, coding content, and genome evolution.</title>
        <authorList>
            <person name="Gompels U.A."/>
            <person name="Nicholas J."/>
            <person name="Lawrence G.L."/>
            <person name="Jones M."/>
            <person name="Thomson B.J."/>
            <person name="Martin M.E.D."/>
            <person name="Efstathiou S."/>
            <person name="Craxton M.A."/>
            <person name="Macaulay H.A."/>
        </authorList>
    </citation>
    <scope>NUCLEOTIDE SEQUENCE [LARGE SCALE GENOMIC DNA]</scope>
</reference>
<accession>Q01353</accession>
<accession>Q01352</accession>
<keyword id="KW-1185">Reference proteome</keyword>
<organismHost>
    <name type="scientific">Homo sapiens</name>
    <name type="common">Human</name>
    <dbReference type="NCBI Taxonomy" id="9606"/>
</organismHost>
<gene>
    <name type="primary">U7/U5</name>
    <name type="synonym">SSL2</name>
</gene>
<organism>
    <name type="scientific">Human herpesvirus 6A (strain Uganda-1102)</name>
    <name type="common">HHV-6 variant A</name>
    <name type="synonym">Human B lymphotropic virus</name>
    <dbReference type="NCBI Taxonomy" id="10370"/>
    <lineage>
        <taxon>Viruses</taxon>
        <taxon>Duplodnaviria</taxon>
        <taxon>Heunggongvirae</taxon>
        <taxon>Peploviricota</taxon>
        <taxon>Herviviricetes</taxon>
        <taxon>Herpesvirales</taxon>
        <taxon>Orthoherpesviridae</taxon>
        <taxon>Betaherpesvirinae</taxon>
        <taxon>Roseolovirus</taxon>
        <taxon>Roseolovirus humanbeta6a</taxon>
        <taxon>Human betaherpesvirus 6A</taxon>
    </lineage>
</organism>
<feature type="chain" id="PRO_0000116313" description="Protein U7">
    <location>
        <begin position="1"/>
        <end position="1227"/>
    </location>
</feature>
<sequence length="1227" mass="141481">MDLEAKEISGNIPNENALAELCRLCESADLSQIENFVGRYKNWCLSIIWPRNCWLRFTPRKDVAGYTEKMFEDMDDHYQGFVEKLCLLGTIQIPYRDVPILIGRSKRIFLHDLETDTLHFVCDNFEQFVRYGVLGTNIITCAEPVYRHGLYEGPRFESLENLMNNDVLRSPYTLNVHVKLNRKGVLGIKAMRKHYIAMLREFDELARCASLDDVGRFVSLNVGRDLRLDMPVFKSLTLGTRDSVWTGTCRLANLKEQEDLVEKVVVLGYLNDHDYESKCTRPILCIGKSGKIYYYDWIDNVLVKLGDCLLTFLRVGFARLFADYGYEKIGKISMRFGRMSTLGMSETYQSCMSLKIVPVCNDEFALSSCVPTLDFDVDVLSAAYGDGLEISSPGLRCCIAWPPMYALTLGEFYHFHTHRWVSAYDWSSLLDADEFMSAVGYAHPIYRDPNPDYDPYVMHTSTGKTIAVDTVTEKVYIIAESLVQFFNIGLRQFPPFAEAELDPEQEKMWFGETKCGREEFILLQRNLPAMKDYVAKHSGKRIRVDAFQDFDFSFCSLSDIYYLTGPGILEKITEKDYAIIGTCARSQAEPNCRAAIVMGSNCHIYIYVENKISKVSKSLRTFIRRGFDELLYKEKYSLDWSDDTLFYISDTETENLNRMLNGELPVLRSKPRHMCVRKDRLVKDRSKILFAVRLDEEDSPTVKFITKFLTPVFVGRLPATNRFVVPVSRARLTNGLQGTAAARFGIKGLHPSSDCLVWNILVDYEYETYKYPSTYIRADQIADMVKDLKFMDNFNEKWQCITKLAFLGLYAGASLFNFTSKPTLGYWCRYLSEYASMLLFQFESKLKELTKESTRQLGGYNLCHWGQELKDCLENKSDVFFRYDFFERIESCLIEHFMLLCGCVECRRMFIMYNKRGRKFDFGHSVRIQCFPMIGSIRLPAFLHLGEPYDVSLSSLIAKDLGLSMIEGQIELSRLPISLQISVTPDKKALLTFLTNIVFIVFVVNTLYRVINAELDIYYDLFTEEVGKLCVAMEEEMKLGRNGCLGDLCYFSPMKQMKEIVRCPGEKSQFILKCWEALRIGFSVPAYKDYDETPFMEMFFMHHLHIKRFHEDNDRDLVSCDNLIPGFFIVNTDGENFLQRLQRVVLPVVEDYLTNTRCINGTMAFFFSGLKYFGSGNHRGFQISPEKDVRAIAYKLGSLDVLRDDYKYYEYTPPDCPGELNGHGGDE</sequence>
<comment type="similarity">
    <text evidence="1">Belongs to the herpesviridae US22 family.</text>
</comment>
<comment type="sequence caution" evidence="1">
    <conflict type="erroneous gene model prediction">
        <sequence resource="EMBL-CDS" id="BAA00979"/>
    </conflict>
</comment>
<comment type="sequence caution" evidence="1">
    <conflict type="erroneous gene model prediction">
        <sequence resource="EMBL-CDS" id="BAA32340"/>
    </conflict>
</comment>
<protein>
    <recommendedName>
        <fullName>Protein U7</fullName>
    </recommendedName>
</protein>
<name>U7_HHV6U</name>